<proteinExistence type="evidence at transcript level"/>
<protein>
    <recommendedName>
        <fullName>Squalene epoxidase 5</fullName>
        <shortName>AtSQE5</shortName>
        <ecNumber evidence="2">1.14.14.17</ecNumber>
    </recommendedName>
    <alternativeName>
        <fullName>Squalene monooxygenase 1,1</fullName>
        <shortName>SE 1,1</shortName>
    </alternativeName>
</protein>
<comment type="function">
    <text evidence="2">Catalyzes the stereospecific oxidation of squalene to (S)-2,3-epoxysqualene, and is considered to be a rate-limiting enzyme in steroid biosynthesis.</text>
</comment>
<comment type="catalytic activity">
    <reaction evidence="2">
        <text>squalene + reduced [NADPH--hemoprotein reductase] + O2 = (S)-2,3-epoxysqualene + oxidized [NADPH--hemoprotein reductase] + H2O + H(+)</text>
        <dbReference type="Rhea" id="RHEA:25282"/>
        <dbReference type="Rhea" id="RHEA-COMP:11964"/>
        <dbReference type="Rhea" id="RHEA-COMP:11965"/>
        <dbReference type="ChEBI" id="CHEBI:15377"/>
        <dbReference type="ChEBI" id="CHEBI:15378"/>
        <dbReference type="ChEBI" id="CHEBI:15379"/>
        <dbReference type="ChEBI" id="CHEBI:15440"/>
        <dbReference type="ChEBI" id="CHEBI:15441"/>
        <dbReference type="ChEBI" id="CHEBI:57618"/>
        <dbReference type="ChEBI" id="CHEBI:58210"/>
        <dbReference type="EC" id="1.14.14.17"/>
    </reaction>
</comment>
<comment type="cofactor">
    <cofactor evidence="1">
        <name>FAD</name>
        <dbReference type="ChEBI" id="CHEBI:57692"/>
    </cofactor>
</comment>
<comment type="pathway">
    <text>Terpene metabolism; lanosterol biosynthesis; lanosterol from farnesyl diphosphate: step 2/3.</text>
</comment>
<comment type="subcellular location">
    <subcellularLocation>
        <location evidence="5">Membrane</location>
        <topology evidence="5">Multi-pass membrane protein</topology>
    </subcellularLocation>
</comment>
<comment type="alternative products">
    <event type="alternative splicing"/>
    <isoform>
        <id>O65404-1</id>
        <name>1</name>
        <sequence type="displayed"/>
    </isoform>
    <text>A number of isoforms are produced. According to EST sequences.</text>
</comment>
<comment type="tissue specificity">
    <text evidence="4">Expressed in seedlings, leaves, stems and inflorescences. Detected in siliques.</text>
</comment>
<comment type="miscellaneous">
    <text evidence="6">SEQ4 or SEQ5 are unable to complement seq1 mutants.</text>
</comment>
<comment type="similarity">
    <text evidence="5">Belongs to the squalene monooxygenase family.</text>
</comment>
<sequence>MAFTNVCLWTLLAFMLTWTVFYVTNRGKKATQLADAVVEEREDGATDVIIVGAGVGGSALAYALAKDGRRVHVIERDLREPERIMGEFMQPGGRLMLSKLGLEDCLEGIDAQKATGMTVYKDGKEAVASFPVDNNNFPFDPSARSFHNGRFVQRLRQKASSLPNVRLEEGTVKSLIEEKGVIKGVTYKNSAGEETTALAPLTVVCDGCYSNLRRSLNDNNAEVLSYQVGFISKNCQLEEPEKLKLIMSKPSFTMLYQISSTDVRCVFEVLPNNIPSISNGEMATFVKNTIAPQVPLKLRKIFLKGIDEGEHIKAMPTKKMTATLSEKKGVILLGDAFNMRHPAIASGMMVLLSDILILRRLLQPLSNLGNAQKISQVIKSFYDIRKPMSATVNTLGNAFSQVLVASTDEAKEAMRQGCYDYLSSGGFRTSGMMALLGGMNPRPISLIYHLCAITLSSIGHLLSPFPSPLRIWHSLRLFGLAMKMLVPHLKAEGVSQMLFPVNAAAYSKSYMAATAL</sequence>
<reference key="1">
    <citation type="journal article" date="1998" name="DNA Res.">
        <title>Structural analysis of Arabidopsis thaliana chromosome 5. VIII. Sequence features of the regions of 1,081,958 bp covered by seventeen physically assigned P1 and TAC clones.</title>
        <authorList>
            <person name="Asamizu E."/>
            <person name="Sato S."/>
            <person name="Kaneko T."/>
            <person name="Nakamura Y."/>
            <person name="Kotani H."/>
            <person name="Miyajima N."/>
            <person name="Tabata S."/>
        </authorList>
    </citation>
    <scope>NUCLEOTIDE SEQUENCE [LARGE SCALE GENOMIC DNA]</scope>
    <source>
        <strain>cv. Columbia</strain>
    </source>
</reference>
<reference key="2">
    <citation type="journal article" date="2017" name="Plant J.">
        <title>Araport11: a complete reannotation of the Arabidopsis thaliana reference genome.</title>
        <authorList>
            <person name="Cheng C.Y."/>
            <person name="Krishnakumar V."/>
            <person name="Chan A.P."/>
            <person name="Thibaud-Nissen F."/>
            <person name="Schobel S."/>
            <person name="Town C.D."/>
        </authorList>
    </citation>
    <scope>GENOME REANNOTATION</scope>
    <source>
        <strain>cv. Columbia</strain>
    </source>
</reference>
<reference key="3">
    <citation type="journal article" date="1999" name="Plant Mol. Biol.">
        <title>An example of intron junctional sliding in the gene families encoding squalene monooxygenase homologues in Arabidopsis thaliana and Brassica napus.</title>
        <authorList>
            <person name="Schafer U.A."/>
            <person name="Reed D.W."/>
            <person name="Hunter D.G."/>
            <person name="Yao K."/>
            <person name="Weninger A.M."/>
            <person name="Tsang E.W.T."/>
            <person name="Reaney M.J.T."/>
            <person name="MacKenzie S.L."/>
            <person name="Covello P.S."/>
        </authorList>
    </citation>
    <scope>NUCLEOTIDE SEQUENCE [MRNA] OF 3-516</scope>
    <source>
        <strain>cv. Columbia</strain>
    </source>
</reference>
<reference key="4">
    <citation type="journal article" date="2007" name="J. Biol. Chem.">
        <title>Arabidopsis thaliana squalene epoxidase 1 is essential for root and seed development.</title>
        <authorList>
            <person name="Rasbery J.M."/>
            <person name="Shan H."/>
            <person name="LeClair R.J."/>
            <person name="Norman M."/>
            <person name="Matsuda S.P."/>
            <person name="Bartel B."/>
        </authorList>
    </citation>
    <scope>IDENTIFICATION</scope>
    <scope>TISSUE SPECIFICITY</scope>
    <scope>GENE FAMILY</scope>
    <scope>NOMENCLATURE</scope>
</reference>
<feature type="chain" id="PRO_0000209841" description="Squalene epoxidase 5">
    <location>
        <begin position="1"/>
        <end position="516"/>
    </location>
</feature>
<feature type="transmembrane region" description="Helical" evidence="3">
    <location>
        <begin position="3"/>
        <end position="23"/>
    </location>
</feature>
<feature type="transmembrane region" description="Helical" evidence="3">
    <location>
        <begin position="45"/>
        <end position="65"/>
    </location>
</feature>
<feature type="transmembrane region" description="Helical" evidence="3">
    <location>
        <begin position="446"/>
        <end position="466"/>
    </location>
</feature>
<feature type="binding site" evidence="1">
    <location>
        <begin position="55"/>
        <end position="56"/>
    </location>
    <ligand>
        <name>FAD</name>
        <dbReference type="ChEBI" id="CHEBI:57692"/>
    </ligand>
</feature>
<feature type="binding site" evidence="1">
    <location>
        <begin position="75"/>
        <end position="76"/>
    </location>
    <ligand>
        <name>FAD</name>
        <dbReference type="ChEBI" id="CHEBI:57692"/>
    </ligand>
</feature>
<feature type="binding site" evidence="1">
    <location>
        <position position="83"/>
    </location>
    <ligand>
        <name>FAD</name>
        <dbReference type="ChEBI" id="CHEBI:57692"/>
    </ligand>
</feature>
<feature type="binding site" evidence="1">
    <location>
        <position position="88"/>
    </location>
    <ligand>
        <name>FAD</name>
        <dbReference type="ChEBI" id="CHEBI:57692"/>
    </ligand>
</feature>
<feature type="binding site" evidence="1">
    <location>
        <position position="156"/>
    </location>
    <ligand>
        <name>FAD</name>
        <dbReference type="ChEBI" id="CHEBI:57692"/>
    </ligand>
</feature>
<feature type="binding site" evidence="1">
    <location>
        <position position="172"/>
    </location>
    <ligand>
        <name>FAD</name>
        <dbReference type="ChEBI" id="CHEBI:57692"/>
    </ligand>
</feature>
<feature type="binding site" evidence="1">
    <location>
        <position position="335"/>
    </location>
    <ligand>
        <name>FAD</name>
        <dbReference type="ChEBI" id="CHEBI:57692"/>
    </ligand>
</feature>
<feature type="binding site" evidence="1">
    <location>
        <position position="348"/>
    </location>
    <ligand>
        <name>FAD</name>
        <dbReference type="ChEBI" id="CHEBI:57692"/>
    </ligand>
</feature>
<organism>
    <name type="scientific">Arabidopsis thaliana</name>
    <name type="common">Mouse-ear cress</name>
    <dbReference type="NCBI Taxonomy" id="3702"/>
    <lineage>
        <taxon>Eukaryota</taxon>
        <taxon>Viridiplantae</taxon>
        <taxon>Streptophyta</taxon>
        <taxon>Embryophyta</taxon>
        <taxon>Tracheophyta</taxon>
        <taxon>Spermatophyta</taxon>
        <taxon>Magnoliopsida</taxon>
        <taxon>eudicotyledons</taxon>
        <taxon>Gunneridae</taxon>
        <taxon>Pentapetalae</taxon>
        <taxon>rosids</taxon>
        <taxon>malvids</taxon>
        <taxon>Brassicales</taxon>
        <taxon>Brassicaceae</taxon>
        <taxon>Camelineae</taxon>
        <taxon>Arabidopsis</taxon>
    </lineage>
</organism>
<gene>
    <name type="primary">SQE5</name>
    <name type="synonym">SQP1,1</name>
    <name type="ordered locus">At5g24150</name>
    <name type="ORF">K12G2.2</name>
</gene>
<keyword id="KW-0025">Alternative splicing</keyword>
<keyword id="KW-0274">FAD</keyword>
<keyword id="KW-0285">Flavoprotein</keyword>
<keyword id="KW-0472">Membrane</keyword>
<keyword id="KW-0560">Oxidoreductase</keyword>
<keyword id="KW-1185">Reference proteome</keyword>
<keyword id="KW-0812">Transmembrane</keyword>
<keyword id="KW-1133">Transmembrane helix</keyword>
<evidence type="ECO:0000250" key="1">
    <source>
        <dbReference type="UniProtKB" id="Q14534"/>
    </source>
</evidence>
<evidence type="ECO:0000250" key="2">
    <source>
        <dbReference type="UniProtKB" id="Q9SM02"/>
    </source>
</evidence>
<evidence type="ECO:0000255" key="3"/>
<evidence type="ECO:0000269" key="4">
    <source>
    </source>
</evidence>
<evidence type="ECO:0000305" key="5"/>
<evidence type="ECO:0000305" key="6">
    <source>
    </source>
</evidence>
<accession>O65404</accession>
<name>ERG11_ARATH</name>
<dbReference type="EC" id="1.14.14.17" evidence="2"/>
<dbReference type="EMBL" id="AB016883">
    <property type="protein sequence ID" value="BAB08406.1"/>
    <property type="molecule type" value="Genomic_DNA"/>
</dbReference>
<dbReference type="EMBL" id="CP002688">
    <property type="protein sequence ID" value="AED93262.1"/>
    <property type="molecule type" value="Genomic_DNA"/>
</dbReference>
<dbReference type="EMBL" id="AJ005930">
    <property type="protein sequence ID" value="CAA06772.1"/>
    <property type="molecule type" value="mRNA"/>
</dbReference>
<dbReference type="PIR" id="T51365">
    <property type="entry name" value="T51365"/>
</dbReference>
<dbReference type="RefSeq" id="NP_197803.1">
    <molecule id="O65404-1"/>
    <property type="nucleotide sequence ID" value="NM_122320.4"/>
</dbReference>
<dbReference type="SMR" id="O65404"/>
<dbReference type="FunCoup" id="O65404">
    <property type="interactions" value="425"/>
</dbReference>
<dbReference type="STRING" id="3702.O65404"/>
<dbReference type="iPTMnet" id="O65404"/>
<dbReference type="PaxDb" id="3702-AT5G24150.1"/>
<dbReference type="ProteomicsDB" id="220571">
    <molecule id="O65404-1"/>
</dbReference>
<dbReference type="EnsemblPlants" id="AT5G24150.1">
    <molecule id="O65404-1"/>
    <property type="protein sequence ID" value="AT5G24150.1"/>
    <property type="gene ID" value="AT5G24150"/>
</dbReference>
<dbReference type="GeneID" id="832480"/>
<dbReference type="Gramene" id="AT5G24150.1">
    <molecule id="O65404-1"/>
    <property type="protein sequence ID" value="AT5G24150.1"/>
    <property type="gene ID" value="AT5G24150"/>
</dbReference>
<dbReference type="KEGG" id="ath:AT5G24150"/>
<dbReference type="Araport" id="AT5G24150"/>
<dbReference type="TAIR" id="AT5G24150">
    <property type="gene designation" value="SQP1"/>
</dbReference>
<dbReference type="eggNOG" id="KOG1298">
    <property type="taxonomic scope" value="Eukaryota"/>
</dbReference>
<dbReference type="HOGENOM" id="CLU_026390_1_0_1"/>
<dbReference type="InParanoid" id="O65404"/>
<dbReference type="PhylomeDB" id="O65404"/>
<dbReference type="BioCyc" id="ARA:AT5G24150-MONOMER"/>
<dbReference type="UniPathway" id="UPA00767">
    <property type="reaction ID" value="UER00752"/>
</dbReference>
<dbReference type="PRO" id="PR:O65404"/>
<dbReference type="Proteomes" id="UP000006548">
    <property type="component" value="Chromosome 5"/>
</dbReference>
<dbReference type="ExpressionAtlas" id="O65404">
    <property type="expression patterns" value="baseline and differential"/>
</dbReference>
<dbReference type="GO" id="GO:0016020">
    <property type="term" value="C:membrane"/>
    <property type="evidence" value="ECO:0007669"/>
    <property type="project" value="UniProtKB-SubCell"/>
</dbReference>
<dbReference type="GO" id="GO:0050660">
    <property type="term" value="F:flavin adenine dinucleotide binding"/>
    <property type="evidence" value="ECO:0007669"/>
    <property type="project" value="InterPro"/>
</dbReference>
<dbReference type="GO" id="GO:0004506">
    <property type="term" value="F:squalene monooxygenase activity"/>
    <property type="evidence" value="ECO:0000250"/>
    <property type="project" value="TAIR"/>
</dbReference>
<dbReference type="GO" id="GO:0016126">
    <property type="term" value="P:sterol biosynthetic process"/>
    <property type="evidence" value="ECO:0007669"/>
    <property type="project" value="InterPro"/>
</dbReference>
<dbReference type="FunFam" id="3.50.50.60:FF:000074">
    <property type="entry name" value="Squalene monooxygenase 2"/>
    <property type="match status" value="1"/>
</dbReference>
<dbReference type="Gene3D" id="3.50.50.60">
    <property type="entry name" value="FAD/NAD(P)-binding domain"/>
    <property type="match status" value="1"/>
</dbReference>
<dbReference type="InterPro" id="IPR006076">
    <property type="entry name" value="FAD-dep_OxRdtase"/>
</dbReference>
<dbReference type="InterPro" id="IPR036188">
    <property type="entry name" value="FAD/NAD-bd_sf"/>
</dbReference>
<dbReference type="InterPro" id="IPR013698">
    <property type="entry name" value="Squalene_epoxidase"/>
</dbReference>
<dbReference type="InterPro" id="IPR040125">
    <property type="entry name" value="Squalene_monox"/>
</dbReference>
<dbReference type="PANTHER" id="PTHR10835:SF22">
    <property type="entry name" value="SQUALENE EPOXIDASE 5-RELATED"/>
    <property type="match status" value="1"/>
</dbReference>
<dbReference type="PANTHER" id="PTHR10835">
    <property type="entry name" value="SQUALENE MONOOXYGENASE"/>
    <property type="match status" value="1"/>
</dbReference>
<dbReference type="Pfam" id="PF01266">
    <property type="entry name" value="DAO"/>
    <property type="match status" value="1"/>
</dbReference>
<dbReference type="Pfam" id="PF08491">
    <property type="entry name" value="SE"/>
    <property type="match status" value="1"/>
</dbReference>
<dbReference type="PRINTS" id="PR00420">
    <property type="entry name" value="RNGMNOXGNASE"/>
</dbReference>
<dbReference type="SUPFAM" id="SSF51905">
    <property type="entry name" value="FAD/NAD(P)-binding domain"/>
    <property type="match status" value="1"/>
</dbReference>